<proteinExistence type="inferred from homology"/>
<comment type="function">
    <text evidence="1">Endoribonuclease that initiates mRNA decay.</text>
</comment>
<comment type="subcellular location">
    <subcellularLocation>
        <location evidence="1">Cell membrane</location>
        <topology evidence="1">Single-pass membrane protein</topology>
    </subcellularLocation>
</comment>
<comment type="similarity">
    <text evidence="1">Belongs to the RNase Y family.</text>
</comment>
<gene>
    <name evidence="1" type="primary">rny</name>
    <name type="ordered locus">BcerKBAB4_3549</name>
</gene>
<reference key="1">
    <citation type="journal article" date="2008" name="Chem. Biol. Interact.">
        <title>Extending the Bacillus cereus group genomics to putative food-borne pathogens of different toxicity.</title>
        <authorList>
            <person name="Lapidus A."/>
            <person name="Goltsman E."/>
            <person name="Auger S."/>
            <person name="Galleron N."/>
            <person name="Segurens B."/>
            <person name="Dossat C."/>
            <person name="Land M.L."/>
            <person name="Broussolle V."/>
            <person name="Brillard J."/>
            <person name="Guinebretiere M.-H."/>
            <person name="Sanchis V."/>
            <person name="Nguen-the C."/>
            <person name="Lereclus D."/>
            <person name="Richardson P."/>
            <person name="Wincker P."/>
            <person name="Weissenbach J."/>
            <person name="Ehrlich S.D."/>
            <person name="Sorokin A."/>
        </authorList>
    </citation>
    <scope>NUCLEOTIDE SEQUENCE [LARGE SCALE GENOMIC DNA]</scope>
    <source>
        <strain>KBAB4</strain>
    </source>
</reference>
<organism>
    <name type="scientific">Bacillus mycoides (strain KBAB4)</name>
    <name type="common">Bacillus weihenstephanensis</name>
    <dbReference type="NCBI Taxonomy" id="315730"/>
    <lineage>
        <taxon>Bacteria</taxon>
        <taxon>Bacillati</taxon>
        <taxon>Bacillota</taxon>
        <taxon>Bacilli</taxon>
        <taxon>Bacillales</taxon>
        <taxon>Bacillaceae</taxon>
        <taxon>Bacillus</taxon>
        <taxon>Bacillus cereus group</taxon>
    </lineage>
</organism>
<feature type="chain" id="PRO_0000344823" description="Ribonuclease Y">
    <location>
        <begin position="1"/>
        <end position="521"/>
    </location>
</feature>
<feature type="transmembrane region" description="Helical" evidence="1">
    <location>
        <begin position="5"/>
        <end position="25"/>
    </location>
</feature>
<feature type="domain" description="KH" evidence="1">
    <location>
        <begin position="211"/>
        <end position="274"/>
    </location>
</feature>
<feature type="domain" description="HD" evidence="2">
    <location>
        <begin position="337"/>
        <end position="430"/>
    </location>
</feature>
<feature type="region of interest" description="Disordered" evidence="3">
    <location>
        <begin position="87"/>
        <end position="117"/>
    </location>
</feature>
<evidence type="ECO:0000255" key="1">
    <source>
        <dbReference type="HAMAP-Rule" id="MF_00335"/>
    </source>
</evidence>
<evidence type="ECO:0000255" key="2">
    <source>
        <dbReference type="PROSITE-ProRule" id="PRU01175"/>
    </source>
</evidence>
<evidence type="ECO:0000256" key="3">
    <source>
        <dbReference type="SAM" id="MobiDB-lite"/>
    </source>
</evidence>
<keyword id="KW-1003">Cell membrane</keyword>
<keyword id="KW-0255">Endonuclease</keyword>
<keyword id="KW-0378">Hydrolase</keyword>
<keyword id="KW-0472">Membrane</keyword>
<keyword id="KW-0540">Nuclease</keyword>
<keyword id="KW-0694">RNA-binding</keyword>
<keyword id="KW-0812">Transmembrane</keyword>
<keyword id="KW-1133">Transmembrane helix</keyword>
<protein>
    <recommendedName>
        <fullName evidence="1">Ribonuclease Y</fullName>
        <shortName evidence="1">RNase Y</shortName>
        <ecNumber evidence="1">3.1.-.-</ecNumber>
    </recommendedName>
</protein>
<sequence length="521" mass="58691">MSSSTVWILISILLATVGAVVGFFVRKSIAEAKINGAANEAKRILDEANRDAEALKKEALLEAKDEIHTLRTEAELEIRDRRSELQKQENRLMQKEENLDRKDETLDNRERQLEKKEESLVAKQQQIEELESKVGELVQKQQTELERISNLTREQAKAIILGKVESEVSHEIAVMVKESEVRAKEEADKKAKEILSLAMQRCAADHVAETTVSVVNLPNDEMKGRIIGREGRNIRTLETLTGIDLIIDDTPEAVILSGFDPIRRETARIALDKLVQDGRIHPARIEEMVEKSRREVDEYIREVGEQTTFEVGVHGLHPDLIKILGRLKYRTSYGQNVLKHSMEVAYLTGLMAAELGEDEKLARRAGLLHDIGKAIDHEVEGSHVEIGVELATKYKEHPVVINSIASHHGDTEPTSIIAVLVAAADALSAARPGARSETLENYIRRLEKLEEISESYEGVEKSFAIQAGREVRILVKPDTIDDLEAHRLARDIRKRIENELDYPGHIKVTVIRETRAVEYAK</sequence>
<accession>A9VS22</accession>
<dbReference type="EC" id="3.1.-.-" evidence="1"/>
<dbReference type="EMBL" id="CP000903">
    <property type="protein sequence ID" value="ABY44722.1"/>
    <property type="molecule type" value="Genomic_DNA"/>
</dbReference>
<dbReference type="RefSeq" id="WP_002014600.1">
    <property type="nucleotide sequence ID" value="NC_010184.1"/>
</dbReference>
<dbReference type="SMR" id="A9VS22"/>
<dbReference type="GeneID" id="66266656"/>
<dbReference type="KEGG" id="bwe:BcerKBAB4_3549"/>
<dbReference type="eggNOG" id="COG1418">
    <property type="taxonomic scope" value="Bacteria"/>
</dbReference>
<dbReference type="HOGENOM" id="CLU_028328_1_0_9"/>
<dbReference type="Proteomes" id="UP000002154">
    <property type="component" value="Chromosome"/>
</dbReference>
<dbReference type="GO" id="GO:0005886">
    <property type="term" value="C:plasma membrane"/>
    <property type="evidence" value="ECO:0007669"/>
    <property type="project" value="UniProtKB-SubCell"/>
</dbReference>
<dbReference type="GO" id="GO:0003723">
    <property type="term" value="F:RNA binding"/>
    <property type="evidence" value="ECO:0007669"/>
    <property type="project" value="UniProtKB-UniRule"/>
</dbReference>
<dbReference type="GO" id="GO:0004521">
    <property type="term" value="F:RNA endonuclease activity"/>
    <property type="evidence" value="ECO:0007669"/>
    <property type="project" value="UniProtKB-UniRule"/>
</dbReference>
<dbReference type="GO" id="GO:0006402">
    <property type="term" value="P:mRNA catabolic process"/>
    <property type="evidence" value="ECO:0007669"/>
    <property type="project" value="UniProtKB-UniRule"/>
</dbReference>
<dbReference type="CDD" id="cd00077">
    <property type="entry name" value="HDc"/>
    <property type="match status" value="1"/>
</dbReference>
<dbReference type="CDD" id="cd22431">
    <property type="entry name" value="KH-I_RNaseY"/>
    <property type="match status" value="1"/>
</dbReference>
<dbReference type="FunFam" id="1.10.3210.10:FF:000003">
    <property type="entry name" value="Ribonuclease Y"/>
    <property type="match status" value="1"/>
</dbReference>
<dbReference type="FunFam" id="3.30.1370.10:FF:000006">
    <property type="entry name" value="Ribonuclease Y"/>
    <property type="match status" value="1"/>
</dbReference>
<dbReference type="Gene3D" id="1.10.3210.10">
    <property type="entry name" value="Hypothetical protein af1432"/>
    <property type="match status" value="1"/>
</dbReference>
<dbReference type="Gene3D" id="3.30.1370.10">
    <property type="entry name" value="K Homology domain, type 1"/>
    <property type="match status" value="1"/>
</dbReference>
<dbReference type="HAMAP" id="MF_00335">
    <property type="entry name" value="RNase_Y"/>
    <property type="match status" value="1"/>
</dbReference>
<dbReference type="InterPro" id="IPR003607">
    <property type="entry name" value="HD/PDEase_dom"/>
</dbReference>
<dbReference type="InterPro" id="IPR006674">
    <property type="entry name" value="HD_domain"/>
</dbReference>
<dbReference type="InterPro" id="IPR006675">
    <property type="entry name" value="HDIG_dom"/>
</dbReference>
<dbReference type="InterPro" id="IPR004087">
    <property type="entry name" value="KH_dom"/>
</dbReference>
<dbReference type="InterPro" id="IPR004088">
    <property type="entry name" value="KH_dom_type_1"/>
</dbReference>
<dbReference type="InterPro" id="IPR036612">
    <property type="entry name" value="KH_dom_type_1_sf"/>
</dbReference>
<dbReference type="InterPro" id="IPR017705">
    <property type="entry name" value="Ribonuclease_Y"/>
</dbReference>
<dbReference type="InterPro" id="IPR022711">
    <property type="entry name" value="RNase_Y_N"/>
</dbReference>
<dbReference type="NCBIfam" id="TIGR00277">
    <property type="entry name" value="HDIG"/>
    <property type="match status" value="1"/>
</dbReference>
<dbReference type="NCBIfam" id="TIGR03319">
    <property type="entry name" value="RNase_Y"/>
    <property type="match status" value="1"/>
</dbReference>
<dbReference type="PANTHER" id="PTHR12826">
    <property type="entry name" value="RIBONUCLEASE Y"/>
    <property type="match status" value="1"/>
</dbReference>
<dbReference type="PANTHER" id="PTHR12826:SF15">
    <property type="entry name" value="RIBONUCLEASE Y"/>
    <property type="match status" value="1"/>
</dbReference>
<dbReference type="Pfam" id="PF01966">
    <property type="entry name" value="HD"/>
    <property type="match status" value="1"/>
</dbReference>
<dbReference type="Pfam" id="PF00013">
    <property type="entry name" value="KH_1"/>
    <property type="match status" value="1"/>
</dbReference>
<dbReference type="Pfam" id="PF12072">
    <property type="entry name" value="RNase_Y_N"/>
    <property type="match status" value="1"/>
</dbReference>
<dbReference type="SMART" id="SM00471">
    <property type="entry name" value="HDc"/>
    <property type="match status" value="1"/>
</dbReference>
<dbReference type="SMART" id="SM00322">
    <property type="entry name" value="KH"/>
    <property type="match status" value="1"/>
</dbReference>
<dbReference type="SUPFAM" id="SSF54791">
    <property type="entry name" value="Eukaryotic type KH-domain (KH-domain type I)"/>
    <property type="match status" value="1"/>
</dbReference>
<dbReference type="SUPFAM" id="SSF109604">
    <property type="entry name" value="HD-domain/PDEase-like"/>
    <property type="match status" value="1"/>
</dbReference>
<dbReference type="PROSITE" id="PS51831">
    <property type="entry name" value="HD"/>
    <property type="match status" value="1"/>
</dbReference>
<dbReference type="PROSITE" id="PS50084">
    <property type="entry name" value="KH_TYPE_1"/>
    <property type="match status" value="1"/>
</dbReference>
<name>RNY_BACMK</name>